<reference key="1">
    <citation type="journal article" date="2005" name="Proc. Natl. Acad. Sci. U.S.A.">
        <title>Genome analysis of multiple pathogenic isolates of Streptococcus agalactiae: implications for the microbial 'pan-genome'.</title>
        <authorList>
            <person name="Tettelin H."/>
            <person name="Masignani V."/>
            <person name="Cieslewicz M.J."/>
            <person name="Donati C."/>
            <person name="Medini D."/>
            <person name="Ward N.L."/>
            <person name="Angiuoli S.V."/>
            <person name="Crabtree J."/>
            <person name="Jones A.L."/>
            <person name="Durkin A.S."/>
            <person name="DeBoy R.T."/>
            <person name="Davidsen T.M."/>
            <person name="Mora M."/>
            <person name="Scarselli M."/>
            <person name="Margarit y Ros I."/>
            <person name="Peterson J.D."/>
            <person name="Hauser C.R."/>
            <person name="Sundaram J.P."/>
            <person name="Nelson W.C."/>
            <person name="Madupu R."/>
            <person name="Brinkac L.M."/>
            <person name="Dodson R.J."/>
            <person name="Rosovitz M.J."/>
            <person name="Sullivan S.A."/>
            <person name="Daugherty S.C."/>
            <person name="Haft D.H."/>
            <person name="Selengut J."/>
            <person name="Gwinn M.L."/>
            <person name="Zhou L."/>
            <person name="Zafar N."/>
            <person name="Khouri H."/>
            <person name="Radune D."/>
            <person name="Dimitrov G."/>
            <person name="Watkins K."/>
            <person name="O'Connor K.J."/>
            <person name="Smith S."/>
            <person name="Utterback T.R."/>
            <person name="White O."/>
            <person name="Rubens C.E."/>
            <person name="Grandi G."/>
            <person name="Madoff L.C."/>
            <person name="Kasper D.L."/>
            <person name="Telford J.L."/>
            <person name="Wessels M.R."/>
            <person name="Rappuoli R."/>
            <person name="Fraser C.M."/>
        </authorList>
    </citation>
    <scope>NUCLEOTIDE SEQUENCE [LARGE SCALE GENOMIC DNA]</scope>
    <source>
        <strain>ATCC 27591 / A909 / CDC SS700</strain>
    </source>
</reference>
<feature type="chain" id="PRO_0000230938" description="Glucose-6-phosphate isomerase">
    <location>
        <begin position="1"/>
        <end position="449"/>
    </location>
</feature>
<feature type="active site" description="Proton donor" evidence="1">
    <location>
        <position position="291"/>
    </location>
</feature>
<feature type="active site" evidence="1">
    <location>
        <position position="312"/>
    </location>
</feature>
<feature type="active site" evidence="1">
    <location>
        <position position="426"/>
    </location>
</feature>
<proteinExistence type="inferred from homology"/>
<evidence type="ECO:0000255" key="1">
    <source>
        <dbReference type="HAMAP-Rule" id="MF_00473"/>
    </source>
</evidence>
<organism>
    <name type="scientific">Streptococcus agalactiae serotype Ia (strain ATCC 27591 / A909 / CDC SS700)</name>
    <dbReference type="NCBI Taxonomy" id="205921"/>
    <lineage>
        <taxon>Bacteria</taxon>
        <taxon>Bacillati</taxon>
        <taxon>Bacillota</taxon>
        <taxon>Bacilli</taxon>
        <taxon>Lactobacillales</taxon>
        <taxon>Streptococcaceae</taxon>
        <taxon>Streptococcus</taxon>
    </lineage>
</organism>
<gene>
    <name evidence="1" type="primary">pgi</name>
    <name type="ordered locus">SAK_0475</name>
</gene>
<accession>Q3K2Y2</accession>
<protein>
    <recommendedName>
        <fullName evidence="1">Glucose-6-phosphate isomerase</fullName>
        <shortName evidence="1">GPI</shortName>
        <ecNumber evidence="1">5.3.1.9</ecNumber>
    </recommendedName>
    <alternativeName>
        <fullName evidence="1">Phosphoglucose isomerase</fullName>
        <shortName evidence="1">PGI</shortName>
    </alternativeName>
    <alternativeName>
        <fullName evidence="1">Phosphohexose isomerase</fullName>
        <shortName evidence="1">PHI</shortName>
    </alternativeName>
</protein>
<comment type="function">
    <text evidence="1">Catalyzes the reversible isomerization of glucose-6-phosphate to fructose-6-phosphate.</text>
</comment>
<comment type="catalytic activity">
    <reaction evidence="1">
        <text>alpha-D-glucose 6-phosphate = beta-D-fructose 6-phosphate</text>
        <dbReference type="Rhea" id="RHEA:11816"/>
        <dbReference type="ChEBI" id="CHEBI:57634"/>
        <dbReference type="ChEBI" id="CHEBI:58225"/>
        <dbReference type="EC" id="5.3.1.9"/>
    </reaction>
</comment>
<comment type="pathway">
    <text evidence="1">Carbohydrate biosynthesis; gluconeogenesis.</text>
</comment>
<comment type="pathway">
    <text evidence="1">Carbohydrate degradation; glycolysis; D-glyceraldehyde 3-phosphate and glycerone phosphate from D-glucose: step 2/4.</text>
</comment>
<comment type="subcellular location">
    <subcellularLocation>
        <location evidence="1">Cytoplasm</location>
    </subcellularLocation>
</comment>
<comment type="similarity">
    <text evidence="1">Belongs to the GPI family.</text>
</comment>
<sequence>MTHITFDYSKVLGQFVGEHELDYLQPQVSAADAFLRQGTGPGSDFLGWMDLPENYDKEEFSRIQKAAEKIKSDSEVLVVIGIGGSYLGAKAAIDFLNNHFANLQTAEERKAPQILYAGNSISSTYLADLVEYVQDKEFSVNVISKSGTTTEPAIAFRVFKELLVKKYGQEEANKRIYATTDKVKGAVKVEADANNWETFVVPDNVGGRFSVLTAVGLLPIAASGADITALMEGANAARKDLSSDKISENIAYQYAAVRNVLYRKGYITEILANYEPSLQYFGEWWKQLAGESEGKDQKGIYPTSANFSTDLHSLGQFIQEGYRNLFETVVRVEKPRKNVTIPELTEDLDGLGYLQGKDVDFVNKKATDGVLLAHTDGGVPNMFVTLPTQDAYTLGYTIYFFELAIGLSGYLNSVNPFDQPGVEAYKRNMFALLGKPGFEELSAELNARL</sequence>
<keyword id="KW-0963">Cytoplasm</keyword>
<keyword id="KW-0312">Gluconeogenesis</keyword>
<keyword id="KW-0324">Glycolysis</keyword>
<keyword id="KW-0413">Isomerase</keyword>
<dbReference type="EC" id="5.3.1.9" evidence="1"/>
<dbReference type="EMBL" id="CP000114">
    <property type="protein sequence ID" value="ABA44794.1"/>
    <property type="molecule type" value="Genomic_DNA"/>
</dbReference>
<dbReference type="RefSeq" id="WP_000148892.1">
    <property type="nucleotide sequence ID" value="NC_007432.1"/>
</dbReference>
<dbReference type="SMR" id="Q3K2Y2"/>
<dbReference type="KEGG" id="sak:SAK_0475"/>
<dbReference type="HOGENOM" id="CLU_037303_0_1_9"/>
<dbReference type="UniPathway" id="UPA00109">
    <property type="reaction ID" value="UER00181"/>
</dbReference>
<dbReference type="UniPathway" id="UPA00138"/>
<dbReference type="GO" id="GO:0005829">
    <property type="term" value="C:cytosol"/>
    <property type="evidence" value="ECO:0007669"/>
    <property type="project" value="TreeGrafter"/>
</dbReference>
<dbReference type="GO" id="GO:0097367">
    <property type="term" value="F:carbohydrate derivative binding"/>
    <property type="evidence" value="ECO:0007669"/>
    <property type="project" value="InterPro"/>
</dbReference>
<dbReference type="GO" id="GO:0004347">
    <property type="term" value="F:glucose-6-phosphate isomerase activity"/>
    <property type="evidence" value="ECO:0007669"/>
    <property type="project" value="UniProtKB-UniRule"/>
</dbReference>
<dbReference type="GO" id="GO:0048029">
    <property type="term" value="F:monosaccharide binding"/>
    <property type="evidence" value="ECO:0007669"/>
    <property type="project" value="TreeGrafter"/>
</dbReference>
<dbReference type="GO" id="GO:0006094">
    <property type="term" value="P:gluconeogenesis"/>
    <property type="evidence" value="ECO:0007669"/>
    <property type="project" value="UniProtKB-UniRule"/>
</dbReference>
<dbReference type="GO" id="GO:0051156">
    <property type="term" value="P:glucose 6-phosphate metabolic process"/>
    <property type="evidence" value="ECO:0007669"/>
    <property type="project" value="TreeGrafter"/>
</dbReference>
<dbReference type="GO" id="GO:0006096">
    <property type="term" value="P:glycolytic process"/>
    <property type="evidence" value="ECO:0007669"/>
    <property type="project" value="UniProtKB-UniRule"/>
</dbReference>
<dbReference type="CDD" id="cd05015">
    <property type="entry name" value="SIS_PGI_1"/>
    <property type="match status" value="1"/>
</dbReference>
<dbReference type="CDD" id="cd05016">
    <property type="entry name" value="SIS_PGI_2"/>
    <property type="match status" value="1"/>
</dbReference>
<dbReference type="FunFam" id="3.40.50.10490:FF:000015">
    <property type="entry name" value="Glucose-6-phosphate isomerase"/>
    <property type="match status" value="1"/>
</dbReference>
<dbReference type="FunFam" id="3.40.50.10490:FF:000016">
    <property type="entry name" value="Glucose-6-phosphate isomerase"/>
    <property type="match status" value="1"/>
</dbReference>
<dbReference type="Gene3D" id="3.40.50.10490">
    <property type="entry name" value="Glucose-6-phosphate isomerase like protein, domain 1"/>
    <property type="match status" value="3"/>
</dbReference>
<dbReference type="HAMAP" id="MF_00473">
    <property type="entry name" value="G6P_isomerase"/>
    <property type="match status" value="1"/>
</dbReference>
<dbReference type="InterPro" id="IPR001672">
    <property type="entry name" value="G6P_Isomerase"/>
</dbReference>
<dbReference type="InterPro" id="IPR018189">
    <property type="entry name" value="Phosphoglucose_isomerase_CS"/>
</dbReference>
<dbReference type="InterPro" id="IPR046348">
    <property type="entry name" value="SIS_dom_sf"/>
</dbReference>
<dbReference type="InterPro" id="IPR035476">
    <property type="entry name" value="SIS_PGI_1"/>
</dbReference>
<dbReference type="InterPro" id="IPR035482">
    <property type="entry name" value="SIS_PGI_2"/>
</dbReference>
<dbReference type="NCBIfam" id="NF010697">
    <property type="entry name" value="PRK14097.1"/>
    <property type="match status" value="1"/>
</dbReference>
<dbReference type="PANTHER" id="PTHR11469">
    <property type="entry name" value="GLUCOSE-6-PHOSPHATE ISOMERASE"/>
    <property type="match status" value="1"/>
</dbReference>
<dbReference type="PANTHER" id="PTHR11469:SF1">
    <property type="entry name" value="GLUCOSE-6-PHOSPHATE ISOMERASE"/>
    <property type="match status" value="1"/>
</dbReference>
<dbReference type="Pfam" id="PF00342">
    <property type="entry name" value="PGI"/>
    <property type="match status" value="1"/>
</dbReference>
<dbReference type="PRINTS" id="PR00662">
    <property type="entry name" value="G6PISOMERASE"/>
</dbReference>
<dbReference type="SUPFAM" id="SSF53697">
    <property type="entry name" value="SIS domain"/>
    <property type="match status" value="1"/>
</dbReference>
<dbReference type="PROSITE" id="PS00765">
    <property type="entry name" value="P_GLUCOSE_ISOMERASE_1"/>
    <property type="match status" value="1"/>
</dbReference>
<dbReference type="PROSITE" id="PS00174">
    <property type="entry name" value="P_GLUCOSE_ISOMERASE_2"/>
    <property type="match status" value="1"/>
</dbReference>
<dbReference type="PROSITE" id="PS51463">
    <property type="entry name" value="P_GLUCOSE_ISOMERASE_3"/>
    <property type="match status" value="1"/>
</dbReference>
<name>G6PI_STRA1</name>